<feature type="chain" id="PRO_0000109003" description="UDP-N-acetylmuramoylalanine--D-glutamate ligase">
    <location>
        <begin position="1"/>
        <end position="475"/>
    </location>
</feature>
<feature type="binding site" evidence="1">
    <location>
        <begin position="130"/>
        <end position="136"/>
    </location>
    <ligand>
        <name>ATP</name>
        <dbReference type="ChEBI" id="CHEBI:30616"/>
    </ligand>
</feature>
<dbReference type="EC" id="6.3.2.9" evidence="1"/>
<dbReference type="EMBL" id="BX248358">
    <property type="protein sequence ID" value="CAE50125.1"/>
    <property type="status" value="ALT_INIT"/>
    <property type="molecule type" value="Genomic_DNA"/>
</dbReference>
<dbReference type="RefSeq" id="WP_003852157.1">
    <property type="nucleotide sequence ID" value="NC_002935.2"/>
</dbReference>
<dbReference type="SMR" id="Q6NGC6"/>
<dbReference type="STRING" id="257309.DIP1600"/>
<dbReference type="DNASU" id="2650789"/>
<dbReference type="KEGG" id="cdi:DIP1600"/>
<dbReference type="HOGENOM" id="CLU_032540_0_0_11"/>
<dbReference type="UniPathway" id="UPA00219"/>
<dbReference type="Proteomes" id="UP000002198">
    <property type="component" value="Chromosome"/>
</dbReference>
<dbReference type="GO" id="GO:0005737">
    <property type="term" value="C:cytoplasm"/>
    <property type="evidence" value="ECO:0007669"/>
    <property type="project" value="UniProtKB-SubCell"/>
</dbReference>
<dbReference type="GO" id="GO:0005524">
    <property type="term" value="F:ATP binding"/>
    <property type="evidence" value="ECO:0007669"/>
    <property type="project" value="UniProtKB-UniRule"/>
</dbReference>
<dbReference type="GO" id="GO:0008764">
    <property type="term" value="F:UDP-N-acetylmuramoylalanine-D-glutamate ligase activity"/>
    <property type="evidence" value="ECO:0007669"/>
    <property type="project" value="UniProtKB-UniRule"/>
</dbReference>
<dbReference type="GO" id="GO:0051301">
    <property type="term" value="P:cell division"/>
    <property type="evidence" value="ECO:0007669"/>
    <property type="project" value="UniProtKB-KW"/>
</dbReference>
<dbReference type="GO" id="GO:0071555">
    <property type="term" value="P:cell wall organization"/>
    <property type="evidence" value="ECO:0007669"/>
    <property type="project" value="UniProtKB-KW"/>
</dbReference>
<dbReference type="GO" id="GO:0009252">
    <property type="term" value="P:peptidoglycan biosynthetic process"/>
    <property type="evidence" value="ECO:0007669"/>
    <property type="project" value="UniProtKB-UniRule"/>
</dbReference>
<dbReference type="GO" id="GO:0008360">
    <property type="term" value="P:regulation of cell shape"/>
    <property type="evidence" value="ECO:0007669"/>
    <property type="project" value="UniProtKB-KW"/>
</dbReference>
<dbReference type="Gene3D" id="3.90.190.20">
    <property type="entry name" value="Mur ligase, C-terminal domain"/>
    <property type="match status" value="1"/>
</dbReference>
<dbReference type="Gene3D" id="3.40.1190.10">
    <property type="entry name" value="Mur-like, catalytic domain"/>
    <property type="match status" value="1"/>
</dbReference>
<dbReference type="Gene3D" id="3.40.50.720">
    <property type="entry name" value="NAD(P)-binding Rossmann-like Domain"/>
    <property type="match status" value="1"/>
</dbReference>
<dbReference type="HAMAP" id="MF_00639">
    <property type="entry name" value="MurD"/>
    <property type="match status" value="1"/>
</dbReference>
<dbReference type="InterPro" id="IPR036565">
    <property type="entry name" value="Mur-like_cat_sf"/>
</dbReference>
<dbReference type="InterPro" id="IPR004101">
    <property type="entry name" value="Mur_ligase_C"/>
</dbReference>
<dbReference type="InterPro" id="IPR036615">
    <property type="entry name" value="Mur_ligase_C_dom_sf"/>
</dbReference>
<dbReference type="InterPro" id="IPR013221">
    <property type="entry name" value="Mur_ligase_cen"/>
</dbReference>
<dbReference type="InterPro" id="IPR005762">
    <property type="entry name" value="MurD"/>
</dbReference>
<dbReference type="NCBIfam" id="TIGR01087">
    <property type="entry name" value="murD"/>
    <property type="match status" value="1"/>
</dbReference>
<dbReference type="PANTHER" id="PTHR43692">
    <property type="entry name" value="UDP-N-ACETYLMURAMOYLALANINE--D-GLUTAMATE LIGASE"/>
    <property type="match status" value="1"/>
</dbReference>
<dbReference type="PANTHER" id="PTHR43692:SF1">
    <property type="entry name" value="UDP-N-ACETYLMURAMOYLALANINE--D-GLUTAMATE LIGASE"/>
    <property type="match status" value="1"/>
</dbReference>
<dbReference type="Pfam" id="PF02875">
    <property type="entry name" value="Mur_ligase_C"/>
    <property type="match status" value="1"/>
</dbReference>
<dbReference type="Pfam" id="PF08245">
    <property type="entry name" value="Mur_ligase_M"/>
    <property type="match status" value="1"/>
</dbReference>
<dbReference type="Pfam" id="PF21799">
    <property type="entry name" value="MurD-like_N"/>
    <property type="match status" value="1"/>
</dbReference>
<dbReference type="SUPFAM" id="SSF51984">
    <property type="entry name" value="MurCD N-terminal domain"/>
    <property type="match status" value="1"/>
</dbReference>
<dbReference type="SUPFAM" id="SSF53623">
    <property type="entry name" value="MurD-like peptide ligases, catalytic domain"/>
    <property type="match status" value="1"/>
</dbReference>
<dbReference type="SUPFAM" id="SSF53244">
    <property type="entry name" value="MurD-like peptide ligases, peptide-binding domain"/>
    <property type="match status" value="1"/>
</dbReference>
<reference key="1">
    <citation type="journal article" date="2003" name="Nucleic Acids Res.">
        <title>The complete genome sequence and analysis of Corynebacterium diphtheriae NCTC13129.</title>
        <authorList>
            <person name="Cerdeno-Tarraga A.-M."/>
            <person name="Efstratiou A."/>
            <person name="Dover L.G."/>
            <person name="Holden M.T.G."/>
            <person name="Pallen M.J."/>
            <person name="Bentley S.D."/>
            <person name="Besra G.S."/>
            <person name="Churcher C.M."/>
            <person name="James K.D."/>
            <person name="De Zoysa A."/>
            <person name="Chillingworth T."/>
            <person name="Cronin A."/>
            <person name="Dowd L."/>
            <person name="Feltwell T."/>
            <person name="Hamlin N."/>
            <person name="Holroyd S."/>
            <person name="Jagels K."/>
            <person name="Moule S."/>
            <person name="Quail M.A."/>
            <person name="Rabbinowitsch E."/>
            <person name="Rutherford K.M."/>
            <person name="Thomson N.R."/>
            <person name="Unwin L."/>
            <person name="Whitehead S."/>
            <person name="Barrell B.G."/>
            <person name="Parkhill J."/>
        </authorList>
    </citation>
    <scope>NUCLEOTIDE SEQUENCE [LARGE SCALE GENOMIC DNA]</scope>
    <source>
        <strain>ATCC 700971 / NCTC 13129 / Biotype gravis</strain>
    </source>
</reference>
<protein>
    <recommendedName>
        <fullName evidence="1">UDP-N-acetylmuramoylalanine--D-glutamate ligase</fullName>
        <ecNumber evidence="1">6.3.2.9</ecNumber>
    </recommendedName>
    <alternativeName>
        <fullName evidence="1">D-glutamic acid-adding enzyme</fullName>
    </alternativeName>
    <alternativeName>
        <fullName evidence="1">UDP-N-acetylmuramoyl-L-alanyl-D-glutamate synthetase</fullName>
    </alternativeName>
</protein>
<proteinExistence type="inferred from homology"/>
<accession>Q6NGC6</accession>
<sequence length="475" mass="49528">MTVSVEELKVLLPELAGRVLVAGAGVSGVGITQLLREMGCAVTVADSNSAQLDKLAQQTGCQTISPADVVSDGFQDYTVVVTSPGWRPDSPLLVAAQSAGLEVIGDVELVYRLDRAEVFGPKRTWMVVTGTNGKTTTTAMLAEIMQHSGARAAAVGNIGVSVADAVRTQPRIDVLVAELSSFQLHWSSTLVPDVGILLNLADDHIDWHGSFAQYAQDKAKVLAAPTAIAGFDNGHVMTETTRIQRAEDADPIIGFTLGEPAKGMVGVRDGQLIDCAFGDNVVLRSAEGIEPAGPAGLNDALAAAAAARSMGVSAVCIEEALSKFEVAGHRGQCVGRHREVVAIDNSKATNPHAADSALAGFSSVVWVAGGQLKGAEIDELIVRHAGRIKAVALLGVDRDVIEDSVRTHIPGIPVLSVSETDPRRAMDEAVAWSVSQAEAGDAIVLAPAAASLDMYTGMGQRGDMFATAIAQHLHD</sequence>
<keyword id="KW-0067">ATP-binding</keyword>
<keyword id="KW-0131">Cell cycle</keyword>
<keyword id="KW-0132">Cell division</keyword>
<keyword id="KW-0133">Cell shape</keyword>
<keyword id="KW-0961">Cell wall biogenesis/degradation</keyword>
<keyword id="KW-0963">Cytoplasm</keyword>
<keyword id="KW-0436">Ligase</keyword>
<keyword id="KW-0547">Nucleotide-binding</keyword>
<keyword id="KW-0573">Peptidoglycan synthesis</keyword>
<keyword id="KW-1185">Reference proteome</keyword>
<name>MURD_CORDI</name>
<comment type="function">
    <text evidence="1">Cell wall formation. Catalyzes the addition of glutamate to the nucleotide precursor UDP-N-acetylmuramoyl-L-alanine (UMA).</text>
</comment>
<comment type="catalytic activity">
    <reaction evidence="1">
        <text>UDP-N-acetyl-alpha-D-muramoyl-L-alanine + D-glutamate + ATP = UDP-N-acetyl-alpha-D-muramoyl-L-alanyl-D-glutamate + ADP + phosphate + H(+)</text>
        <dbReference type="Rhea" id="RHEA:16429"/>
        <dbReference type="ChEBI" id="CHEBI:15378"/>
        <dbReference type="ChEBI" id="CHEBI:29986"/>
        <dbReference type="ChEBI" id="CHEBI:30616"/>
        <dbReference type="ChEBI" id="CHEBI:43474"/>
        <dbReference type="ChEBI" id="CHEBI:83898"/>
        <dbReference type="ChEBI" id="CHEBI:83900"/>
        <dbReference type="ChEBI" id="CHEBI:456216"/>
        <dbReference type="EC" id="6.3.2.9"/>
    </reaction>
</comment>
<comment type="pathway">
    <text evidence="1">Cell wall biogenesis; peptidoglycan biosynthesis.</text>
</comment>
<comment type="subcellular location">
    <subcellularLocation>
        <location evidence="1">Cytoplasm</location>
    </subcellularLocation>
</comment>
<comment type="similarity">
    <text evidence="1">Belongs to the MurCDEF family.</text>
</comment>
<comment type="sequence caution" evidence="2">
    <conflict type="erroneous initiation">
        <sequence resource="EMBL-CDS" id="CAE50125"/>
    </conflict>
</comment>
<evidence type="ECO:0000255" key="1">
    <source>
        <dbReference type="HAMAP-Rule" id="MF_00639"/>
    </source>
</evidence>
<evidence type="ECO:0000305" key="2"/>
<organism>
    <name type="scientific">Corynebacterium diphtheriae (strain ATCC 700971 / NCTC 13129 / Biotype gravis)</name>
    <dbReference type="NCBI Taxonomy" id="257309"/>
    <lineage>
        <taxon>Bacteria</taxon>
        <taxon>Bacillati</taxon>
        <taxon>Actinomycetota</taxon>
        <taxon>Actinomycetes</taxon>
        <taxon>Mycobacteriales</taxon>
        <taxon>Corynebacteriaceae</taxon>
        <taxon>Corynebacterium</taxon>
    </lineage>
</organism>
<gene>
    <name evidence="1" type="primary">murD</name>
    <name type="ordered locus">DIP1600</name>
</gene>